<comment type="subcellular location">
    <subcellularLocation>
        <location evidence="3">Cell membrane</location>
        <topology evidence="1">Multi-pass membrane protein</topology>
    </subcellularLocation>
</comment>
<comment type="alternative products">
    <event type="alternative splicing"/>
    <isoform>
        <id>E9Q6C8-1</id>
        <name>1</name>
        <sequence type="displayed"/>
    </isoform>
    <isoform>
        <id>E9Q6C8-2</id>
        <name>2</name>
        <sequence type="described" ref="VSP_042406"/>
    </isoform>
    <isoform>
        <id>E9Q6C8-3</id>
        <name>3</name>
        <sequence type="described" ref="VSP_042407"/>
    </isoform>
</comment>
<comment type="similarity">
    <text evidence="6">Belongs to the XK family.</text>
</comment>
<sequence>MAAKSDGGGVGVGFAQLHNLDEAVGSGEEDGEPGGGGCGGGDGSEPGESSSLHICHCCNTSSCYWGCRSACLRSLLGKKPRRSAAAADGGDQPLQPPGAAGRHPPTPSAGRPQPASPQVERPWLDCLWIVLALLVFFGDVGTDLWLALDYYRKGDYGCFGLTLFFVLVPSLLVQSLSFRWFVQDYTGGGLGAVEGLSSRGPPMMGAGYGHGAARGGPGAGGSATPGAQRLCRLSVWIWQSVIHLLQMGQVWRYIRTMYLGIQSQRQKEHQRRFYWAMMYEYADVNMLRLLETFLESAPQLVLQLCIMIQKNSAETLPCVSSVTSLMSLAWVLASYHKLLRDSRDDKKSMSYRGALIHLFWRLFTISSRVISFALFASIFQLYFGIFVVVHWCAMAFWIIHGGTDFCMSKWEEILFNMVVGIVYIFCWFNVKEGRTRYRMFAYYTIVLTENAALTFLWYFYRNPESTDSYAVPALCCVFVSFVAGITLMLLYYGVLHPMGPRAKVFASSCCAELLWGIPLPPDVEPMAPQTPGYRGTQVTPTRAVTEQQEDLTADTCLPVFQVRPMGPSTPSGRPYHPEGPLIKIDMPRKRYPAWDAHFVDRRLRRTINILQYVTPTAVGIRYRDGPLLYELLQYESSL</sequence>
<accession>E9Q6C8</accession>
<accession>G3X9Y8</accession>
<accession>Q5GH65</accession>
<accession>Q8R1I8</accession>
<reference key="1">
    <citation type="journal article" date="2009" name="PLoS Biol.">
        <title>Lineage-specific biology revealed by a finished genome assembly of the mouse.</title>
        <authorList>
            <person name="Church D.M."/>
            <person name="Goodstadt L."/>
            <person name="Hillier L.W."/>
            <person name="Zody M.C."/>
            <person name="Goldstein S."/>
            <person name="She X."/>
            <person name="Bult C.J."/>
            <person name="Agarwala R."/>
            <person name="Cherry J.L."/>
            <person name="DiCuccio M."/>
            <person name="Hlavina W."/>
            <person name="Kapustin Y."/>
            <person name="Meric P."/>
            <person name="Maglott D."/>
            <person name="Birtle Z."/>
            <person name="Marques A.C."/>
            <person name="Graves T."/>
            <person name="Zhou S."/>
            <person name="Teague B."/>
            <person name="Potamousis K."/>
            <person name="Churas C."/>
            <person name="Place M."/>
            <person name="Herschleb J."/>
            <person name="Runnheim R."/>
            <person name="Forrest D."/>
            <person name="Amos-Landgraf J."/>
            <person name="Schwartz D.C."/>
            <person name="Cheng Z."/>
            <person name="Lindblad-Toh K."/>
            <person name="Eichler E.E."/>
            <person name="Ponting C.P."/>
        </authorList>
    </citation>
    <scope>NUCLEOTIDE SEQUENCE [LARGE SCALE GENOMIC DNA]</scope>
    <source>
        <strain>C57BL/6J</strain>
    </source>
</reference>
<reference key="2">
    <citation type="journal article" date="2004" name="Genome Res.">
        <title>The status, quality, and expansion of the NIH full-length cDNA project: the Mammalian Gene Collection (MGC).</title>
        <authorList>
            <consortium name="The MGC Project Team"/>
        </authorList>
    </citation>
    <scope>NUCLEOTIDE SEQUENCE [LARGE SCALE MRNA] (ISOFORM 2)</scope>
    <source>
        <strain>FVB/N</strain>
        <tissue>Colon</tissue>
    </source>
</reference>
<reference key="3">
    <citation type="submission" date="2005-09" db="EMBL/GenBank/DDBJ databases">
        <authorList>
            <person name="Mural R.J."/>
            <person name="Adams M.D."/>
            <person name="Myers E.W."/>
            <person name="Smith H.O."/>
            <person name="Venter J.C."/>
        </authorList>
    </citation>
    <scope>NUCLEOTIDE SEQUENCE [LARGE SCALE GENOMIC DNA]</scope>
</reference>
<reference key="4">
    <citation type="submission" date="2004-01" db="EMBL/GenBank/DDBJ databases">
        <title>A superfamily of XK-related genes (XRG) widely expressed in vertebrates and invertebrates.</title>
        <authorList>
            <person name="Huang C.-H."/>
            <person name="Chen Y."/>
        </authorList>
    </citation>
    <scope>NUCLEOTIDE SEQUENCE [MRNA] OF 99-638 (ISOFORM 1)</scope>
    <source>
        <strain>C57BL/6J</strain>
    </source>
</reference>
<reference key="5">
    <citation type="journal article" date="2014" name="J. Biol. Chem.">
        <title>Exposure of phosphatidylserine by Xk-related protein family members during apoptosis.</title>
        <authorList>
            <person name="Suzuki J."/>
            <person name="Imanishi E."/>
            <person name="Nagata S."/>
        </authorList>
    </citation>
    <scope>SUBCELLULAR LOCATION</scope>
</reference>
<dbReference type="EMBL" id="AC118607">
    <property type="status" value="NOT_ANNOTATED_CDS"/>
    <property type="molecule type" value="Genomic_DNA"/>
</dbReference>
<dbReference type="EMBL" id="AC120788">
    <property type="status" value="NOT_ANNOTATED_CDS"/>
    <property type="molecule type" value="Genomic_DNA"/>
</dbReference>
<dbReference type="EMBL" id="BC024502">
    <property type="protein sequence ID" value="AAH24502.1"/>
    <property type="molecule type" value="mRNA"/>
</dbReference>
<dbReference type="EMBL" id="CH466535">
    <property type="protein sequence ID" value="EDL36060.1"/>
    <property type="molecule type" value="Genomic_DNA"/>
</dbReference>
<dbReference type="EMBL" id="AY534252">
    <property type="protein sequence ID" value="AAT07101.1"/>
    <property type="molecule type" value="mRNA"/>
</dbReference>
<dbReference type="CCDS" id="CCDS27204.2">
    <molecule id="E9Q6C8-1"/>
</dbReference>
<dbReference type="RefSeq" id="NP_775569.2">
    <molecule id="E9Q6C8-1"/>
    <property type="nucleotide sequence ID" value="NM_173393.2"/>
</dbReference>
<dbReference type="RefSeq" id="XP_006518944.1">
    <molecule id="E9Q6C8-3"/>
    <property type="nucleotide sequence ID" value="XM_006518881.5"/>
</dbReference>
<dbReference type="SMR" id="E9Q6C8"/>
<dbReference type="FunCoup" id="E9Q6C8">
    <property type="interactions" value="726"/>
</dbReference>
<dbReference type="STRING" id="10090.ENSMUSP00000113708"/>
<dbReference type="GlyGen" id="E9Q6C8">
    <property type="glycosylation" value="2 sites"/>
</dbReference>
<dbReference type="PhosphoSitePlus" id="E9Q6C8"/>
<dbReference type="PaxDb" id="10090-ENSMUSP00000113708"/>
<dbReference type="PeptideAtlas" id="E9Q6C8"/>
<dbReference type="ProteomicsDB" id="299709">
    <molecule id="E9Q6C8-1"/>
</dbReference>
<dbReference type="ProteomicsDB" id="299710">
    <molecule id="E9Q6C8-2"/>
</dbReference>
<dbReference type="ProteomicsDB" id="299711">
    <molecule id="E9Q6C8-3"/>
</dbReference>
<dbReference type="Antibodypedia" id="8456">
    <property type="antibodies" value="39 antibodies from 14 providers"/>
</dbReference>
<dbReference type="Ensembl" id="ENSMUST00000119973.3">
    <molecule id="E9Q6C8-1"/>
    <property type="protein sequence ID" value="ENSMUSP00000113708.3"/>
    <property type="gene ID" value="ENSMUSG00000035067.10"/>
</dbReference>
<dbReference type="Ensembl" id="ENSMUST00000120820.3">
    <molecule id="E9Q6C8-3"/>
    <property type="protein sequence ID" value="ENSMUSP00000112691.3"/>
    <property type="gene ID" value="ENSMUSG00000035067.10"/>
</dbReference>
<dbReference type="GeneID" id="219149"/>
<dbReference type="KEGG" id="mmu:219149"/>
<dbReference type="UCSC" id="uc007uhu.2">
    <molecule id="E9Q6C8-1"/>
    <property type="organism name" value="mouse"/>
</dbReference>
<dbReference type="AGR" id="MGI:2447765"/>
<dbReference type="CTD" id="286046"/>
<dbReference type="MGI" id="MGI:2447765">
    <property type="gene designation" value="Xkr6"/>
</dbReference>
<dbReference type="VEuPathDB" id="HostDB:ENSMUSG00000035067"/>
<dbReference type="eggNOG" id="KOG4790">
    <property type="taxonomic scope" value="Eukaryota"/>
</dbReference>
<dbReference type="GeneTree" id="ENSGT01110000267146"/>
<dbReference type="HOGENOM" id="CLU_028534_1_0_1"/>
<dbReference type="InParanoid" id="E9Q6C8"/>
<dbReference type="OMA" id="VWVWQTI"/>
<dbReference type="OrthoDB" id="6356248at2759"/>
<dbReference type="PhylomeDB" id="E9Q6C8"/>
<dbReference type="TreeFam" id="TF316454"/>
<dbReference type="BioGRID-ORCS" id="219149">
    <property type="hits" value="4 hits in 76 CRISPR screens"/>
</dbReference>
<dbReference type="PRO" id="PR:E9Q6C8"/>
<dbReference type="Proteomes" id="UP000000589">
    <property type="component" value="Chromosome 14"/>
</dbReference>
<dbReference type="RNAct" id="E9Q6C8">
    <property type="molecule type" value="protein"/>
</dbReference>
<dbReference type="Bgee" id="ENSMUSG00000035067">
    <property type="expression patterns" value="Expressed in cerebellum lobe and 190 other cell types or tissues"/>
</dbReference>
<dbReference type="ExpressionAtlas" id="E9Q6C8">
    <property type="expression patterns" value="baseline and differential"/>
</dbReference>
<dbReference type="GO" id="GO:0005886">
    <property type="term" value="C:plasma membrane"/>
    <property type="evidence" value="ECO:0000314"/>
    <property type="project" value="UniProtKB"/>
</dbReference>
<dbReference type="InterPro" id="IPR018629">
    <property type="entry name" value="XK-rel"/>
</dbReference>
<dbReference type="InterPro" id="IPR050895">
    <property type="entry name" value="XK-related_scramblase"/>
</dbReference>
<dbReference type="PANTHER" id="PTHR16024">
    <property type="entry name" value="XK-RELATED PROTEIN"/>
    <property type="match status" value="1"/>
</dbReference>
<dbReference type="PANTHER" id="PTHR16024:SF9">
    <property type="entry name" value="XK-RELATED PROTEIN 6"/>
    <property type="match status" value="1"/>
</dbReference>
<dbReference type="Pfam" id="PF09815">
    <property type="entry name" value="XK-related"/>
    <property type="match status" value="1"/>
</dbReference>
<feature type="chain" id="PRO_0000415853" description="XK-related protein 6">
    <location>
        <begin position="1"/>
        <end position="638"/>
    </location>
</feature>
<feature type="transmembrane region" description="Helical" evidence="1">
    <location>
        <begin position="127"/>
        <end position="147"/>
    </location>
</feature>
<feature type="transmembrane region" description="Helical" evidence="1">
    <location>
        <begin position="158"/>
        <end position="178"/>
    </location>
</feature>
<feature type="transmembrane region" description="Helical" evidence="1">
    <location>
        <begin position="315"/>
        <end position="335"/>
    </location>
</feature>
<feature type="transmembrane region" description="Helical" evidence="1">
    <location>
        <begin position="369"/>
        <end position="389"/>
    </location>
</feature>
<feature type="transmembrane region" description="Helical" evidence="1">
    <location>
        <begin position="410"/>
        <end position="430"/>
    </location>
</feature>
<feature type="transmembrane region" description="Helical" evidence="1">
    <location>
        <begin position="439"/>
        <end position="459"/>
    </location>
</feature>
<feature type="transmembrane region" description="Helical" evidence="1">
    <location>
        <begin position="470"/>
        <end position="490"/>
    </location>
</feature>
<feature type="region of interest" description="Disordered" evidence="2">
    <location>
        <begin position="24"/>
        <end position="43"/>
    </location>
</feature>
<feature type="region of interest" description="Disordered" evidence="2">
    <location>
        <begin position="82"/>
        <end position="117"/>
    </location>
</feature>
<feature type="compositionally biased region" description="Gly residues" evidence="2">
    <location>
        <begin position="33"/>
        <end position="43"/>
    </location>
</feature>
<feature type="splice variant" id="VSP_042406" description="In isoform 2." evidence="4">
    <location>
        <begin position="1"/>
        <end position="276"/>
    </location>
</feature>
<feature type="splice variant" id="VSP_042407" description="In isoform 3." evidence="6">
    <location>
        <begin position="1"/>
        <end position="256"/>
    </location>
</feature>
<evidence type="ECO:0000255" key="1"/>
<evidence type="ECO:0000256" key="2">
    <source>
        <dbReference type="SAM" id="MobiDB-lite"/>
    </source>
</evidence>
<evidence type="ECO:0000269" key="3">
    <source>
    </source>
</evidence>
<evidence type="ECO:0000303" key="4">
    <source>
    </source>
</evidence>
<evidence type="ECO:0000303" key="5">
    <source>
    </source>
</evidence>
<evidence type="ECO:0000305" key="6"/>
<evidence type="ECO:0000312" key="7">
    <source>
        <dbReference type="MGI" id="MGI:2447765"/>
    </source>
</evidence>
<gene>
    <name evidence="5 7" type="primary">Xkr6</name>
</gene>
<protein>
    <recommendedName>
        <fullName evidence="6">XK-related protein 6</fullName>
    </recommendedName>
</protein>
<name>XKR6_MOUSE</name>
<proteinExistence type="evidence at transcript level"/>
<keyword id="KW-0025">Alternative splicing</keyword>
<keyword id="KW-1003">Cell membrane</keyword>
<keyword id="KW-0472">Membrane</keyword>
<keyword id="KW-1185">Reference proteome</keyword>
<keyword id="KW-0812">Transmembrane</keyword>
<keyword id="KW-1133">Transmembrane helix</keyword>
<organism>
    <name type="scientific">Mus musculus</name>
    <name type="common">Mouse</name>
    <dbReference type="NCBI Taxonomy" id="10090"/>
    <lineage>
        <taxon>Eukaryota</taxon>
        <taxon>Metazoa</taxon>
        <taxon>Chordata</taxon>
        <taxon>Craniata</taxon>
        <taxon>Vertebrata</taxon>
        <taxon>Euteleostomi</taxon>
        <taxon>Mammalia</taxon>
        <taxon>Eutheria</taxon>
        <taxon>Euarchontoglires</taxon>
        <taxon>Glires</taxon>
        <taxon>Rodentia</taxon>
        <taxon>Myomorpha</taxon>
        <taxon>Muroidea</taxon>
        <taxon>Muridae</taxon>
        <taxon>Murinae</taxon>
        <taxon>Mus</taxon>
        <taxon>Mus</taxon>
    </lineage>
</organism>